<dbReference type="EC" id="2.3.1.274" evidence="1"/>
<dbReference type="EMBL" id="CP000542">
    <property type="protein sequence ID" value="ABM58983.1"/>
    <property type="molecule type" value="Genomic_DNA"/>
</dbReference>
<dbReference type="RefSeq" id="WP_011810975.1">
    <property type="nucleotide sequence ID" value="NC_008786.1"/>
</dbReference>
<dbReference type="SMR" id="A1WMX6"/>
<dbReference type="STRING" id="391735.Veis_3253"/>
<dbReference type="GeneID" id="76461702"/>
<dbReference type="KEGG" id="vei:Veis_3253"/>
<dbReference type="eggNOG" id="COG0416">
    <property type="taxonomic scope" value="Bacteria"/>
</dbReference>
<dbReference type="HOGENOM" id="CLU_039379_1_0_4"/>
<dbReference type="OrthoDB" id="9806408at2"/>
<dbReference type="UniPathway" id="UPA00085"/>
<dbReference type="Proteomes" id="UP000000374">
    <property type="component" value="Chromosome"/>
</dbReference>
<dbReference type="GO" id="GO:0005737">
    <property type="term" value="C:cytoplasm"/>
    <property type="evidence" value="ECO:0007669"/>
    <property type="project" value="UniProtKB-SubCell"/>
</dbReference>
<dbReference type="GO" id="GO:0043811">
    <property type="term" value="F:phosphate:acyl-[acyl carrier protein] acyltransferase activity"/>
    <property type="evidence" value="ECO:0007669"/>
    <property type="project" value="UniProtKB-UniRule"/>
</dbReference>
<dbReference type="GO" id="GO:0006633">
    <property type="term" value="P:fatty acid biosynthetic process"/>
    <property type="evidence" value="ECO:0007669"/>
    <property type="project" value="UniProtKB-UniRule"/>
</dbReference>
<dbReference type="GO" id="GO:0008654">
    <property type="term" value="P:phospholipid biosynthetic process"/>
    <property type="evidence" value="ECO:0007669"/>
    <property type="project" value="UniProtKB-KW"/>
</dbReference>
<dbReference type="Gene3D" id="3.40.718.10">
    <property type="entry name" value="Isopropylmalate Dehydrogenase"/>
    <property type="match status" value="1"/>
</dbReference>
<dbReference type="HAMAP" id="MF_00019">
    <property type="entry name" value="PlsX"/>
    <property type="match status" value="1"/>
</dbReference>
<dbReference type="InterPro" id="IPR003664">
    <property type="entry name" value="FA_synthesis"/>
</dbReference>
<dbReference type="InterPro" id="IPR012281">
    <property type="entry name" value="Phospholipid_synth_PlsX-like"/>
</dbReference>
<dbReference type="NCBIfam" id="TIGR00182">
    <property type="entry name" value="plsX"/>
    <property type="match status" value="1"/>
</dbReference>
<dbReference type="PANTHER" id="PTHR30100">
    <property type="entry name" value="FATTY ACID/PHOSPHOLIPID SYNTHESIS PROTEIN PLSX"/>
    <property type="match status" value="1"/>
</dbReference>
<dbReference type="PANTHER" id="PTHR30100:SF1">
    <property type="entry name" value="PHOSPHATE ACYLTRANSFERASE"/>
    <property type="match status" value="1"/>
</dbReference>
<dbReference type="Pfam" id="PF02504">
    <property type="entry name" value="FA_synthesis"/>
    <property type="match status" value="1"/>
</dbReference>
<dbReference type="PIRSF" id="PIRSF002465">
    <property type="entry name" value="Phsphlp_syn_PlsX"/>
    <property type="match status" value="1"/>
</dbReference>
<dbReference type="SUPFAM" id="SSF53659">
    <property type="entry name" value="Isocitrate/Isopropylmalate dehydrogenase-like"/>
    <property type="match status" value="1"/>
</dbReference>
<gene>
    <name evidence="1" type="primary">plsX</name>
    <name type="ordered locus">Veis_3253</name>
</gene>
<proteinExistence type="inferred from homology"/>
<feature type="chain" id="PRO_1000001858" description="Phosphate acyltransferase">
    <location>
        <begin position="1"/>
        <end position="351"/>
    </location>
</feature>
<evidence type="ECO:0000255" key="1">
    <source>
        <dbReference type="HAMAP-Rule" id="MF_00019"/>
    </source>
</evidence>
<name>PLSX_VEREI</name>
<reference key="1">
    <citation type="submission" date="2006-12" db="EMBL/GenBank/DDBJ databases">
        <title>Complete sequence of chromosome 1 of Verminephrobacter eiseniae EF01-2.</title>
        <authorList>
            <person name="Copeland A."/>
            <person name="Lucas S."/>
            <person name="Lapidus A."/>
            <person name="Barry K."/>
            <person name="Detter J.C."/>
            <person name="Glavina del Rio T."/>
            <person name="Dalin E."/>
            <person name="Tice H."/>
            <person name="Pitluck S."/>
            <person name="Chertkov O."/>
            <person name="Brettin T."/>
            <person name="Bruce D."/>
            <person name="Han C."/>
            <person name="Tapia R."/>
            <person name="Gilna P."/>
            <person name="Schmutz J."/>
            <person name="Larimer F."/>
            <person name="Land M."/>
            <person name="Hauser L."/>
            <person name="Kyrpides N."/>
            <person name="Kim E."/>
            <person name="Stahl D."/>
            <person name="Richardson P."/>
        </authorList>
    </citation>
    <scope>NUCLEOTIDE SEQUENCE [LARGE SCALE GENOMIC DNA]</scope>
    <source>
        <strain>EF01-2</strain>
    </source>
</reference>
<keyword id="KW-0963">Cytoplasm</keyword>
<keyword id="KW-0444">Lipid biosynthesis</keyword>
<keyword id="KW-0443">Lipid metabolism</keyword>
<keyword id="KW-0594">Phospholipid biosynthesis</keyword>
<keyword id="KW-1208">Phospholipid metabolism</keyword>
<keyword id="KW-1185">Reference proteome</keyword>
<keyword id="KW-0808">Transferase</keyword>
<protein>
    <recommendedName>
        <fullName evidence="1">Phosphate acyltransferase</fullName>
        <ecNumber evidence="1">2.3.1.274</ecNumber>
    </recommendedName>
    <alternativeName>
        <fullName evidence="1">Acyl-ACP phosphotransacylase</fullName>
    </alternativeName>
    <alternativeName>
        <fullName evidence="1">Acyl-[acyl-carrier-protein]--phosphate acyltransferase</fullName>
    </alternativeName>
    <alternativeName>
        <fullName evidence="1">Phosphate-acyl-ACP acyltransferase</fullName>
    </alternativeName>
</protein>
<sequence>MITLAVDCMGGDHGPRVTLAACRAFLDHHPDARLLLVGQTDSLRSFTHARAALVAATEVVAMDDSVEVALRKKKDSSMRVAIQQVKDGAASAAVSAGNTGALMAIARYLLKTLDGIDRPAIATQLPNARGGATTVLDLGANVDCSAEHLLQFAVMGSALVSALQEGGEPTVGLLNIGQEAIKGSEIIKRAGELLRSAAQCGDLNFHGNVEGDDIFKGSVDIVVCDGFVGNVALKASEGLAAMIIGALKIEFSRHVFAKMAAIVAYPVLQALMKRMDYRRYNGAALLGLRGLVFKSHGSADAMAFEQALNRAYDAARNNLLDRVRARIAHAAPLLAPADAQPKPDIAATTHR</sequence>
<comment type="function">
    <text evidence="1">Catalyzes the reversible formation of acyl-phosphate (acyl-PO(4)) from acyl-[acyl-carrier-protein] (acyl-ACP). This enzyme utilizes acyl-ACP as fatty acyl donor, but not acyl-CoA.</text>
</comment>
<comment type="catalytic activity">
    <reaction evidence="1">
        <text>a fatty acyl-[ACP] + phosphate = an acyl phosphate + holo-[ACP]</text>
        <dbReference type="Rhea" id="RHEA:42292"/>
        <dbReference type="Rhea" id="RHEA-COMP:9685"/>
        <dbReference type="Rhea" id="RHEA-COMP:14125"/>
        <dbReference type="ChEBI" id="CHEBI:43474"/>
        <dbReference type="ChEBI" id="CHEBI:59918"/>
        <dbReference type="ChEBI" id="CHEBI:64479"/>
        <dbReference type="ChEBI" id="CHEBI:138651"/>
        <dbReference type="EC" id="2.3.1.274"/>
    </reaction>
</comment>
<comment type="pathway">
    <text evidence="1">Lipid metabolism; phospholipid metabolism.</text>
</comment>
<comment type="subunit">
    <text evidence="1">Homodimer. Probably interacts with PlsY.</text>
</comment>
<comment type="subcellular location">
    <subcellularLocation>
        <location evidence="1">Cytoplasm</location>
    </subcellularLocation>
    <text evidence="1">Associated with the membrane possibly through PlsY.</text>
</comment>
<comment type="similarity">
    <text evidence="1">Belongs to the PlsX family.</text>
</comment>
<organism>
    <name type="scientific">Verminephrobacter eiseniae (strain EF01-2)</name>
    <dbReference type="NCBI Taxonomy" id="391735"/>
    <lineage>
        <taxon>Bacteria</taxon>
        <taxon>Pseudomonadati</taxon>
        <taxon>Pseudomonadota</taxon>
        <taxon>Betaproteobacteria</taxon>
        <taxon>Burkholderiales</taxon>
        <taxon>Comamonadaceae</taxon>
        <taxon>Verminephrobacter</taxon>
    </lineage>
</organism>
<accession>A1WMX6</accession>